<proteinExistence type="evidence at transcript level"/>
<gene>
    <name type="primary">BABAM2</name>
    <name type="synonym">BRE</name>
</gene>
<evidence type="ECO:0000250" key="1">
    <source>
        <dbReference type="UniProtKB" id="Q9NXR7"/>
    </source>
</evidence>
<evidence type="ECO:0000255" key="2"/>
<feature type="chain" id="PRO_0000373930" description="BRISC and BRCA1-A complex member 2">
    <location>
        <begin position="1"/>
        <end position="383"/>
    </location>
</feature>
<feature type="region of interest" description="UEV-like 1">
    <location>
        <begin position="30"/>
        <end position="147"/>
    </location>
</feature>
<feature type="region of interest" description="UEV-like 2">
    <location>
        <begin position="275"/>
        <end position="364"/>
    </location>
</feature>
<feature type="modified residue" description="N-acetylmethionine" evidence="1">
    <location>
        <position position="1"/>
    </location>
</feature>
<feature type="modified residue" description="Phosphoserine" evidence="1">
    <location>
        <position position="2"/>
    </location>
</feature>
<keyword id="KW-0007">Acetylation</keyword>
<keyword id="KW-0053">Apoptosis</keyword>
<keyword id="KW-0131">Cell cycle</keyword>
<keyword id="KW-0132">Cell division</keyword>
<keyword id="KW-0156">Chromatin regulator</keyword>
<keyword id="KW-0963">Cytoplasm</keyword>
<keyword id="KW-0227">DNA damage</keyword>
<keyword id="KW-0234">DNA repair</keyword>
<keyword id="KW-0498">Mitosis</keyword>
<keyword id="KW-0539">Nucleus</keyword>
<keyword id="KW-0597">Phosphoprotein</keyword>
<keyword id="KW-1185">Reference proteome</keyword>
<keyword id="KW-0677">Repeat</keyword>
<keyword id="KW-0833">Ubl conjugation pathway</keyword>
<accession>A6QQW8</accession>
<comment type="function">
    <text evidence="1">Component of the BRCA1-A complex, a complex that specifically recognizes 'Lys-63'-linked ubiquitinated histones H2A and H2AX at DNA lesions sites, leading to target the BRCA1-BARD1 heterodimer to sites of DNA damage at double-strand breaks (DSBs). The BRCA1-A complex also possesses deubiquitinase activity that specifically removes 'Lys-63'-linked ubiquitin on histones H2A and H2AX. In the BRCA1-A complex, it acts as an adapter that bridges the interaction between BABAM1/NBA1 and the rest of the complex, thereby being required for the complex integrity and modulating the E3 ubiquitin ligase activity of the BRCA1-BARD1 heterodimer. Component of the BRISC complex, a multiprotein complex that specifically cleaves 'Lys-63'-linked ubiquitin in various substrates. Within the BRISC complex, acts as an adapter that bridges the interaction between BABAM1/NBA1 and the rest of the complex, thereby being required for the complex integrity. The BRISC complex is required for normal mitotic spindle assembly and microtubule attachment to kinetochores via its role in deubiquitinating NUMA1. The BRISC complex plays a role in interferon signaling via its role in the deubiquitination of the interferon receptor IFNAR1; deubiquitination increases IFNAR1 activity by enhancing its stability and cell surface expression. Down-regulates the response to bacterial lipopolysaccharide (LPS) via its role in IFNAR1 deubiquitination. May play a role in homeostasis or cellular differentiation in cells of neural, epithelial and germline origins. May also act as a death receptor-associated anti-apoptotic protein, which inhibits the mitochondrial apoptotic pathway. May regulate TNF-alpha signaling through its interactions with TNFRSF1A; however these effects may be indirect.</text>
</comment>
<comment type="subunit">
    <text evidence="1">Component of the ARISC complex, at least composed of UIMC1/RAP80, ABRAXAS1, BRCC3/BRCC36, BABAM2 and BABAM1/NBA1. Component of the BRCA1-A complex, at least composed of BRCA1, BARD1, UIMC1/RAP80, ABRAXAS1, BRCC3/BRCC36, BABAM2 and BABAM1/NBA1. In the BRCA1-A complex, interacts directly with ABRAXAS1, BRCC3/BRCC36 and BABAM1/NBA1. Binds polyubiquitin. Component of the BRISC complex, at least composed of ABRAXAS2, BRCC3/BRCC36, BABAM2 and BABAM1/NBA1. Identified in a complex with SHMT2 and the other subunits of the BRISC complex. Component of the BRCA1/BRCA2 containing complex (BRCC), which also contains BRCA1, BRCA2, BARD1, BRCC3/BRCC36 and RAD51. BRCC is a ubiquitin E3 ligase complex that enhances cellular survival following DNA damage. May interact with FAS and TNFRSF1A.</text>
</comment>
<comment type="subcellular location">
    <subcellularLocation>
        <location evidence="1">Cytoplasm</location>
    </subcellularLocation>
    <subcellularLocation>
        <location evidence="1">Nucleus</location>
    </subcellularLocation>
    <text evidence="1">Localizes at sites of DNA damage at double-strand breaks (DSBs).</text>
</comment>
<comment type="domain">
    <text evidence="1">Contains 2 ubiquitin-conjugating enzyme family-like (UEV-like) regions. These regions lack the critical Cys residues required for ubiquitination but retain the ability to bind ubiquitin.</text>
</comment>
<comment type="similarity">
    <text evidence="2">Belongs to the BABAM2 family.</text>
</comment>
<dbReference type="EMBL" id="BC150022">
    <property type="protein sequence ID" value="AAI50023.1"/>
    <property type="molecule type" value="mRNA"/>
</dbReference>
<dbReference type="RefSeq" id="NP_001095744.1">
    <property type="nucleotide sequence ID" value="NM_001102274.2"/>
</dbReference>
<dbReference type="RefSeq" id="XP_005213107.1">
    <property type="nucleotide sequence ID" value="XM_005213050.3"/>
</dbReference>
<dbReference type="RefSeq" id="XP_010808551.1">
    <property type="nucleotide sequence ID" value="XM_010810249.2"/>
</dbReference>
<dbReference type="RefSeq" id="XP_059747459.1">
    <property type="nucleotide sequence ID" value="XM_059891476.1"/>
</dbReference>
<dbReference type="RefSeq" id="XP_059747460.1">
    <property type="nucleotide sequence ID" value="XM_059891477.1"/>
</dbReference>
<dbReference type="RefSeq" id="XP_059747461.1">
    <property type="nucleotide sequence ID" value="XM_059891478.1"/>
</dbReference>
<dbReference type="SMR" id="A6QQW8"/>
<dbReference type="FunCoup" id="A6QQW8">
    <property type="interactions" value="2840"/>
</dbReference>
<dbReference type="STRING" id="9913.ENSBTAP00000041902"/>
<dbReference type="PaxDb" id="9913-ENSBTAP00000041902"/>
<dbReference type="GeneID" id="614152"/>
<dbReference type="KEGG" id="bta:614152"/>
<dbReference type="CTD" id="9577"/>
<dbReference type="VEuPathDB" id="HostDB:ENSBTAG00000031335"/>
<dbReference type="eggNOG" id="ENOG502QUU0">
    <property type="taxonomic scope" value="Eukaryota"/>
</dbReference>
<dbReference type="HOGENOM" id="CLU_057019_0_0_1"/>
<dbReference type="InParanoid" id="A6QQW8"/>
<dbReference type="OMA" id="AGSTWRH"/>
<dbReference type="OrthoDB" id="538811at2759"/>
<dbReference type="TreeFam" id="TF328507"/>
<dbReference type="Reactome" id="R-BTA-5689901">
    <property type="pathway name" value="Metalloprotease DUBs"/>
</dbReference>
<dbReference type="Reactome" id="R-BTA-5693565">
    <property type="pathway name" value="Recruitment and ATM-mediated phosphorylation of repair and signaling proteins at DNA double strand breaks"/>
</dbReference>
<dbReference type="Reactome" id="R-BTA-5693571">
    <property type="pathway name" value="Nonhomologous End-Joining (NHEJ)"/>
</dbReference>
<dbReference type="Reactome" id="R-BTA-5693607">
    <property type="pathway name" value="Processing of DNA double-strand break ends"/>
</dbReference>
<dbReference type="Reactome" id="R-BTA-69473">
    <property type="pathway name" value="G2/M DNA damage checkpoint"/>
</dbReference>
<dbReference type="Proteomes" id="UP000009136">
    <property type="component" value="Chromosome 11"/>
</dbReference>
<dbReference type="Bgee" id="ENSBTAG00000031335">
    <property type="expression patterns" value="Expressed in diaphragm and 106 other cell types or tissues"/>
</dbReference>
<dbReference type="GO" id="GO:0070531">
    <property type="term" value="C:BRCA1-A complex"/>
    <property type="evidence" value="ECO:0000250"/>
    <property type="project" value="UniProtKB"/>
</dbReference>
<dbReference type="GO" id="GO:0070552">
    <property type="term" value="C:BRISC complex"/>
    <property type="evidence" value="ECO:0000250"/>
    <property type="project" value="UniProtKB"/>
</dbReference>
<dbReference type="GO" id="GO:0005737">
    <property type="term" value="C:cytoplasm"/>
    <property type="evidence" value="ECO:0000250"/>
    <property type="project" value="UniProtKB"/>
</dbReference>
<dbReference type="GO" id="GO:0005634">
    <property type="term" value="C:nucleus"/>
    <property type="evidence" value="ECO:0000250"/>
    <property type="project" value="UniProtKB"/>
</dbReference>
<dbReference type="GO" id="GO:0031593">
    <property type="term" value="F:polyubiquitin modification-dependent protein binding"/>
    <property type="evidence" value="ECO:0000250"/>
    <property type="project" value="UniProtKB"/>
</dbReference>
<dbReference type="GO" id="GO:0006915">
    <property type="term" value="P:apoptotic process"/>
    <property type="evidence" value="ECO:0007669"/>
    <property type="project" value="UniProtKB-KW"/>
</dbReference>
<dbReference type="GO" id="GO:0051301">
    <property type="term" value="P:cell division"/>
    <property type="evidence" value="ECO:0007669"/>
    <property type="project" value="UniProtKB-KW"/>
</dbReference>
<dbReference type="GO" id="GO:0006325">
    <property type="term" value="P:chromatin organization"/>
    <property type="evidence" value="ECO:0007669"/>
    <property type="project" value="UniProtKB-KW"/>
</dbReference>
<dbReference type="GO" id="GO:0006302">
    <property type="term" value="P:double-strand break repair"/>
    <property type="evidence" value="ECO:0000250"/>
    <property type="project" value="UniProtKB"/>
</dbReference>
<dbReference type="GO" id="GO:0007095">
    <property type="term" value="P:mitotic G2 DNA damage checkpoint signaling"/>
    <property type="evidence" value="ECO:0000250"/>
    <property type="project" value="UniProtKB"/>
</dbReference>
<dbReference type="GO" id="GO:0045739">
    <property type="term" value="P:positive regulation of DNA repair"/>
    <property type="evidence" value="ECO:0000250"/>
    <property type="project" value="UniProtKB"/>
</dbReference>
<dbReference type="GO" id="GO:0010212">
    <property type="term" value="P:response to ionizing radiation"/>
    <property type="evidence" value="ECO:0000250"/>
    <property type="project" value="UniProtKB"/>
</dbReference>
<dbReference type="CDD" id="cd23664">
    <property type="entry name" value="BRE"/>
    <property type="match status" value="1"/>
</dbReference>
<dbReference type="InterPro" id="IPR010358">
    <property type="entry name" value="BRE"/>
</dbReference>
<dbReference type="PANTHER" id="PTHR15189">
    <property type="entry name" value="BRISC AND BRCA1-A COMPLEX MEMBER 2"/>
    <property type="match status" value="1"/>
</dbReference>
<dbReference type="PANTHER" id="PTHR15189:SF7">
    <property type="entry name" value="BRISC AND BRCA1-A COMPLEX MEMBER 2"/>
    <property type="match status" value="1"/>
</dbReference>
<dbReference type="Pfam" id="PF06113">
    <property type="entry name" value="BRE"/>
    <property type="match status" value="1"/>
</dbReference>
<protein>
    <recommendedName>
        <fullName>BRISC and BRCA1-A complex member 2</fullName>
    </recommendedName>
    <alternativeName>
        <fullName>BRCA1-A complex subunit BRE</fullName>
    </alternativeName>
    <alternativeName>
        <fullName>BRCA1/BRCA2-containing complex subunit 45</fullName>
    </alternativeName>
    <alternativeName>
        <fullName>Brain and reproductive organ-expressed protein</fullName>
    </alternativeName>
</protein>
<sequence>MSPEVALNRISPMLSPFISSVVRNGKVGLDATNCLRITDLKSGCTSLTPGPNCDRFKLHIPYAGETLKWDIIFNAQYPELPPDFIFGEDAEFLPDPSALHNLASWNPSNPECLLLVVKELVQQYHQFQCSRLRESSRLMFEYQTLLEEPQYGENMEIYAGKKNNWTGEFSARFLLKLPVDFSNIPTYLLKDVNEDPGEDVALLSVSFEDTEATQVYPKLYLSPRIEHALGGSSALHIPAFPGGGCLIDYVPQVCHLLTNKVQYVIQGYHKRREYIAAFLSHFGTGVVEYDAEGFTKLTLLLMWKDFCFLVHIDLPLFFPRDQPTLTFQSVYHFTNSGQLYSQAQKNYPYSPRWDGNEMAKRAKAYFKTFVPQFQEAAFANGKL</sequence>
<organism>
    <name type="scientific">Bos taurus</name>
    <name type="common">Bovine</name>
    <dbReference type="NCBI Taxonomy" id="9913"/>
    <lineage>
        <taxon>Eukaryota</taxon>
        <taxon>Metazoa</taxon>
        <taxon>Chordata</taxon>
        <taxon>Craniata</taxon>
        <taxon>Vertebrata</taxon>
        <taxon>Euteleostomi</taxon>
        <taxon>Mammalia</taxon>
        <taxon>Eutheria</taxon>
        <taxon>Laurasiatheria</taxon>
        <taxon>Artiodactyla</taxon>
        <taxon>Ruminantia</taxon>
        <taxon>Pecora</taxon>
        <taxon>Bovidae</taxon>
        <taxon>Bovinae</taxon>
        <taxon>Bos</taxon>
    </lineage>
</organism>
<name>BABA2_BOVIN</name>
<reference key="1">
    <citation type="submission" date="2007-07" db="EMBL/GenBank/DDBJ databases">
        <authorList>
            <consortium name="NIH - Mammalian Gene Collection (MGC) project"/>
        </authorList>
    </citation>
    <scope>NUCLEOTIDE SEQUENCE [LARGE SCALE MRNA]</scope>
    <source>
        <strain>Hereford</strain>
        <tissue>Thymus</tissue>
    </source>
</reference>